<feature type="chain" id="PRO_0000210718" description="Putative MgpC-like protein MPN_093">
    <location>
        <begin position="1"/>
        <end position="301"/>
    </location>
</feature>
<sequence>MGSNAVPSLWYWVVGEDQESGRATWWAHTELNWGTDKQKQFVENQLGFKDDSNSDSKNSNLKAQGLTQPAYLIAGLDVVADHLVFAAFKAGAVGYDMSTENSAATKDQALAWSTTAGLDSAGGYKALVENTAGLNGPINGLFTLLDSFAYVTPVSGMKGGSQNNEEVQTKYPVKDDSKASAKIASLINASPLNSYGDDGVTVFDALGLNFNFKLNEARLPSRTDQLLVYGIVNESELKSARENAQSTSDANSNTKVKWTNTASHYLPVPYYYSANFPEVGNRRRAEQRNGVITIKRPSTQR</sequence>
<gene>
    <name type="ordered locus">MPN_093</name>
    <name type="ORF">MP061</name>
    <name type="ORF">R02_orf301</name>
</gene>
<name>Y093_MYCPN</name>
<protein>
    <recommendedName>
        <fullName>Putative MgpC-like protein MPN_093</fullName>
    </recommendedName>
</protein>
<evidence type="ECO:0000305" key="1"/>
<keyword id="KW-1185">Reference proteome</keyword>
<proteinExistence type="uncertain"/>
<organism>
    <name type="scientific">Mycoplasma pneumoniae (strain ATCC 29342 / M129 / Subtype 1)</name>
    <name type="common">Mycoplasmoides pneumoniae</name>
    <dbReference type="NCBI Taxonomy" id="272634"/>
    <lineage>
        <taxon>Bacteria</taxon>
        <taxon>Bacillati</taxon>
        <taxon>Mycoplasmatota</taxon>
        <taxon>Mycoplasmoidales</taxon>
        <taxon>Mycoplasmoidaceae</taxon>
        <taxon>Mycoplasmoides</taxon>
    </lineage>
</organism>
<comment type="similarity">
    <text evidence="1">Belongs to the MgpC family.</text>
</comment>
<comment type="caution">
    <text evidence="1">Could be the product of a pseudogene.</text>
</comment>
<reference key="1">
    <citation type="journal article" date="1996" name="Nucleic Acids Res.">
        <title>Complete sequence analysis of the genome of the bacterium Mycoplasma pneumoniae.</title>
        <authorList>
            <person name="Himmelreich R."/>
            <person name="Hilbert H."/>
            <person name="Plagens H."/>
            <person name="Pirkl E."/>
            <person name="Li B.-C."/>
            <person name="Herrmann R."/>
        </authorList>
    </citation>
    <scope>NUCLEOTIDE SEQUENCE [LARGE SCALE GENOMIC DNA]</scope>
    <source>
        <strain>ATCC 29342 / M129 / Subtype 1</strain>
    </source>
</reference>
<dbReference type="EMBL" id="U00089">
    <property type="protein sequence ID" value="AAB95709.1"/>
    <property type="molecule type" value="Genomic_DNA"/>
</dbReference>
<dbReference type="PIR" id="S73387">
    <property type="entry name" value="S73387"/>
</dbReference>
<dbReference type="SMR" id="P75599"/>
<dbReference type="STRING" id="272634.MPN_093"/>
<dbReference type="EnsemblBacteria" id="AAB95709">
    <property type="protein sequence ID" value="AAB95709"/>
    <property type="gene ID" value="MPN_093"/>
</dbReference>
<dbReference type="KEGG" id="mpn:MPN_093"/>
<dbReference type="HOGENOM" id="CLU_054937_0_0_14"/>
<dbReference type="Proteomes" id="UP000000808">
    <property type="component" value="Chromosome"/>
</dbReference>
<dbReference type="InterPro" id="IPR007885">
    <property type="entry name" value="MgpC"/>
</dbReference>
<dbReference type="Pfam" id="PF05220">
    <property type="entry name" value="MgpC"/>
    <property type="match status" value="1"/>
</dbReference>
<accession>P75599</accession>